<proteinExistence type="inferred from homology"/>
<comment type="catalytic activity">
    <reaction evidence="1">
        <text>(6R)-10-formyltetrahydrofolate + 5-amino-1-(5-phospho-beta-D-ribosyl)imidazole-4-carboxamide = 5-formamido-1-(5-phospho-D-ribosyl)imidazole-4-carboxamide + (6S)-5,6,7,8-tetrahydrofolate</text>
        <dbReference type="Rhea" id="RHEA:22192"/>
        <dbReference type="ChEBI" id="CHEBI:57453"/>
        <dbReference type="ChEBI" id="CHEBI:58467"/>
        <dbReference type="ChEBI" id="CHEBI:58475"/>
        <dbReference type="ChEBI" id="CHEBI:195366"/>
        <dbReference type="EC" id="2.1.2.3"/>
    </reaction>
</comment>
<comment type="catalytic activity">
    <reaction evidence="1">
        <text>IMP + H2O = 5-formamido-1-(5-phospho-D-ribosyl)imidazole-4-carboxamide</text>
        <dbReference type="Rhea" id="RHEA:18445"/>
        <dbReference type="ChEBI" id="CHEBI:15377"/>
        <dbReference type="ChEBI" id="CHEBI:58053"/>
        <dbReference type="ChEBI" id="CHEBI:58467"/>
        <dbReference type="EC" id="3.5.4.10"/>
    </reaction>
</comment>
<comment type="pathway">
    <text evidence="1">Purine metabolism; IMP biosynthesis via de novo pathway; 5-formamido-1-(5-phospho-D-ribosyl)imidazole-4-carboxamide from 5-amino-1-(5-phospho-D-ribosyl)imidazole-4-carboxamide (10-formyl THF route): step 1/1.</text>
</comment>
<comment type="pathway">
    <text evidence="1">Purine metabolism; IMP biosynthesis via de novo pathway; IMP from 5-formamido-1-(5-phospho-D-ribosyl)imidazole-4-carboxamide: step 1/1.</text>
</comment>
<comment type="domain">
    <text evidence="1">The IMP cyclohydrolase activity resides in the N-terminal region.</text>
</comment>
<comment type="similarity">
    <text evidence="1">Belongs to the PurH family.</text>
</comment>
<keyword id="KW-0007">Acetylation</keyword>
<keyword id="KW-0378">Hydrolase</keyword>
<keyword id="KW-0511">Multifunctional enzyme</keyword>
<keyword id="KW-0658">Purine biosynthesis</keyword>
<keyword id="KW-0808">Transferase</keyword>
<gene>
    <name evidence="1" type="primary">purH</name>
    <name type="ordered locus">ECP_4219</name>
</gene>
<sequence length="529" mass="57341">MQQRRPVRRALLSVSDKAGIVEFAQALSARGVELLSTGGTARLLAEKGLPVTEVSDYTGFPEMMDGRVKTLHPKVHGGILGRRGQDDAIMEEHQIQPIDMVVVNLYPFAQTVAREGCSLEDAVENIDIGGPTMVRSAAKNHRDVAIVVKSSDYDAIIKEMDANEGSLTLATRFNLAIKAFEHTAAYDSMIANYFGSMVPAYHGESKEAAGRFPRTLNLNFIKKQDMRYGENSHQQAAFYIEENVKEASVATATQVQGKALSYNNIADTDAALECVKEFAEPACVIVKHANPCGVAVSNSILDAYDRAYKTDPTSAFGGIIAFNRELDAETAQAIISRQFVEVIIAPSASEEALKITAAKQNVRVLICGQWGERAPGLDFKRVNGGLLVQDRDLGMVGAEELRVVTKRQPTEQELRDALFCWKVAKFVKSNAIVYAKNNMTIGIGAGQMSRVYSAKIAGIKAADEGLEVKGSSMASDAFFPFRDGIDAAAAAGVTCVIQPGGSIRDDEVIAAADEHGIAMLFTDMRHFRH</sequence>
<organism>
    <name type="scientific">Escherichia coli O6:K15:H31 (strain 536 / UPEC)</name>
    <dbReference type="NCBI Taxonomy" id="362663"/>
    <lineage>
        <taxon>Bacteria</taxon>
        <taxon>Pseudomonadati</taxon>
        <taxon>Pseudomonadota</taxon>
        <taxon>Gammaproteobacteria</taxon>
        <taxon>Enterobacterales</taxon>
        <taxon>Enterobacteriaceae</taxon>
        <taxon>Escherichia</taxon>
    </lineage>
</organism>
<protein>
    <recommendedName>
        <fullName evidence="1">Bifunctional purine biosynthesis protein PurH</fullName>
    </recommendedName>
    <domain>
        <recommendedName>
            <fullName evidence="1">Phosphoribosylaminoimidazolecarboxamide formyltransferase</fullName>
            <ecNumber evidence="1">2.1.2.3</ecNumber>
        </recommendedName>
        <alternativeName>
            <fullName evidence="1">AICAR transformylase</fullName>
        </alternativeName>
    </domain>
    <domain>
        <recommendedName>
            <fullName evidence="1">IMP cyclohydrolase</fullName>
            <ecNumber evidence="1">3.5.4.10</ecNumber>
        </recommendedName>
        <alternativeName>
            <fullName evidence="1">ATIC</fullName>
        </alternativeName>
        <alternativeName>
            <fullName evidence="1">IMP synthase</fullName>
        </alternativeName>
        <alternativeName>
            <fullName evidence="1">Inosinicase</fullName>
        </alternativeName>
    </domain>
</protein>
<accession>Q0TA59</accession>
<reference key="1">
    <citation type="journal article" date="2006" name="Mol. Microbiol.">
        <title>Role of pathogenicity island-associated integrases in the genome plasticity of uropathogenic Escherichia coli strain 536.</title>
        <authorList>
            <person name="Hochhut B."/>
            <person name="Wilde C."/>
            <person name="Balling G."/>
            <person name="Middendorf B."/>
            <person name="Dobrindt U."/>
            <person name="Brzuszkiewicz E."/>
            <person name="Gottschalk G."/>
            <person name="Carniel E."/>
            <person name="Hacker J."/>
        </authorList>
    </citation>
    <scope>NUCLEOTIDE SEQUENCE [LARGE SCALE GENOMIC DNA]</scope>
    <source>
        <strain>536 / UPEC</strain>
    </source>
</reference>
<name>PUR9_ECOL5</name>
<dbReference type="EC" id="2.1.2.3" evidence="1"/>
<dbReference type="EC" id="3.5.4.10" evidence="1"/>
<dbReference type="EMBL" id="CP000247">
    <property type="protein sequence ID" value="ABG72170.1"/>
    <property type="molecule type" value="Genomic_DNA"/>
</dbReference>
<dbReference type="RefSeq" id="WP_001187580.1">
    <property type="nucleotide sequence ID" value="NC_008253.1"/>
</dbReference>
<dbReference type="SMR" id="Q0TA59"/>
<dbReference type="KEGG" id="ecp:ECP_4219"/>
<dbReference type="HOGENOM" id="CLU_016316_5_2_6"/>
<dbReference type="UniPathway" id="UPA00074">
    <property type="reaction ID" value="UER00133"/>
</dbReference>
<dbReference type="UniPathway" id="UPA00074">
    <property type="reaction ID" value="UER00135"/>
</dbReference>
<dbReference type="Proteomes" id="UP000009182">
    <property type="component" value="Chromosome"/>
</dbReference>
<dbReference type="GO" id="GO:0005829">
    <property type="term" value="C:cytosol"/>
    <property type="evidence" value="ECO:0007669"/>
    <property type="project" value="TreeGrafter"/>
</dbReference>
<dbReference type="GO" id="GO:0003937">
    <property type="term" value="F:IMP cyclohydrolase activity"/>
    <property type="evidence" value="ECO:0007669"/>
    <property type="project" value="UniProtKB-UniRule"/>
</dbReference>
<dbReference type="GO" id="GO:0004643">
    <property type="term" value="F:phosphoribosylaminoimidazolecarboxamide formyltransferase activity"/>
    <property type="evidence" value="ECO:0007669"/>
    <property type="project" value="UniProtKB-UniRule"/>
</dbReference>
<dbReference type="GO" id="GO:0006189">
    <property type="term" value="P:'de novo' IMP biosynthetic process"/>
    <property type="evidence" value="ECO:0007669"/>
    <property type="project" value="UniProtKB-UniRule"/>
</dbReference>
<dbReference type="CDD" id="cd01421">
    <property type="entry name" value="IMPCH"/>
    <property type="match status" value="1"/>
</dbReference>
<dbReference type="FunFam" id="3.40.140.20:FF:000001">
    <property type="entry name" value="Bifunctional purine biosynthesis protein PurH"/>
    <property type="match status" value="1"/>
</dbReference>
<dbReference type="FunFam" id="3.40.140.20:FF:000002">
    <property type="entry name" value="Bifunctional purine biosynthesis protein PurH"/>
    <property type="match status" value="1"/>
</dbReference>
<dbReference type="FunFam" id="3.40.50.1380:FF:000001">
    <property type="entry name" value="Bifunctional purine biosynthesis protein PurH"/>
    <property type="match status" value="1"/>
</dbReference>
<dbReference type="Gene3D" id="3.40.140.20">
    <property type="match status" value="2"/>
</dbReference>
<dbReference type="Gene3D" id="3.40.50.1380">
    <property type="entry name" value="Methylglyoxal synthase-like domain"/>
    <property type="match status" value="1"/>
</dbReference>
<dbReference type="HAMAP" id="MF_00139">
    <property type="entry name" value="PurH"/>
    <property type="match status" value="1"/>
</dbReference>
<dbReference type="InterPro" id="IPR024051">
    <property type="entry name" value="AICAR_Tfase_dup_dom_sf"/>
</dbReference>
<dbReference type="InterPro" id="IPR016193">
    <property type="entry name" value="Cytidine_deaminase-like"/>
</dbReference>
<dbReference type="InterPro" id="IPR011607">
    <property type="entry name" value="MGS-like_dom"/>
</dbReference>
<dbReference type="InterPro" id="IPR036914">
    <property type="entry name" value="MGS-like_dom_sf"/>
</dbReference>
<dbReference type="InterPro" id="IPR002695">
    <property type="entry name" value="PurH-like"/>
</dbReference>
<dbReference type="NCBIfam" id="NF002049">
    <property type="entry name" value="PRK00881.1"/>
    <property type="match status" value="1"/>
</dbReference>
<dbReference type="NCBIfam" id="TIGR00355">
    <property type="entry name" value="purH"/>
    <property type="match status" value="1"/>
</dbReference>
<dbReference type="PANTHER" id="PTHR11692:SF0">
    <property type="entry name" value="BIFUNCTIONAL PURINE BIOSYNTHESIS PROTEIN ATIC"/>
    <property type="match status" value="1"/>
</dbReference>
<dbReference type="PANTHER" id="PTHR11692">
    <property type="entry name" value="BIFUNCTIONAL PURINE BIOSYNTHESIS PROTEIN PURH"/>
    <property type="match status" value="1"/>
</dbReference>
<dbReference type="Pfam" id="PF01808">
    <property type="entry name" value="AICARFT_IMPCHas"/>
    <property type="match status" value="1"/>
</dbReference>
<dbReference type="Pfam" id="PF02142">
    <property type="entry name" value="MGS"/>
    <property type="match status" value="1"/>
</dbReference>
<dbReference type="PIRSF" id="PIRSF000414">
    <property type="entry name" value="AICARFT_IMPCHas"/>
    <property type="match status" value="1"/>
</dbReference>
<dbReference type="SMART" id="SM00798">
    <property type="entry name" value="AICARFT_IMPCHas"/>
    <property type="match status" value="1"/>
</dbReference>
<dbReference type="SMART" id="SM00851">
    <property type="entry name" value="MGS"/>
    <property type="match status" value="1"/>
</dbReference>
<dbReference type="SUPFAM" id="SSF53927">
    <property type="entry name" value="Cytidine deaminase-like"/>
    <property type="match status" value="1"/>
</dbReference>
<dbReference type="SUPFAM" id="SSF52335">
    <property type="entry name" value="Methylglyoxal synthase-like"/>
    <property type="match status" value="1"/>
</dbReference>
<dbReference type="PROSITE" id="PS51855">
    <property type="entry name" value="MGS"/>
    <property type="match status" value="1"/>
</dbReference>
<feature type="chain" id="PRO_1000018887" description="Bifunctional purine biosynthesis protein PurH">
    <location>
        <begin position="1"/>
        <end position="529"/>
    </location>
</feature>
<feature type="domain" description="MGS-like" evidence="2">
    <location>
        <begin position="1"/>
        <end position="148"/>
    </location>
</feature>
<feature type="modified residue" description="N6-acetyllysine" evidence="1">
    <location>
        <position position="287"/>
    </location>
</feature>
<evidence type="ECO:0000255" key="1">
    <source>
        <dbReference type="HAMAP-Rule" id="MF_00139"/>
    </source>
</evidence>
<evidence type="ECO:0000255" key="2">
    <source>
        <dbReference type="PROSITE-ProRule" id="PRU01202"/>
    </source>
</evidence>